<gene>
    <name type="primary">hycA</name>
    <name type="ordered locus">SF2742</name>
    <name type="ordered locus">S2934</name>
</gene>
<keyword id="KW-1185">Reference proteome</keyword>
<keyword id="KW-0804">Transcription</keyword>
<keyword id="KW-0805">Transcription regulation</keyword>
<comment type="function">
    <text evidence="1">Regulatory protein for the formate hydrogenlyase system. Could act by directly interacting with FhlA or by preventing the binding of FhlA to the upstream activatory sequence (By similarity).</text>
</comment>
<name>HYCA_SHIFL</name>
<protein>
    <recommendedName>
        <fullName>Formate hydrogenlyase regulatory protein HycA</fullName>
    </recommendedName>
</protein>
<feature type="chain" id="PRO_0000084102" description="Formate hydrogenlyase regulatory protein HycA">
    <location>
        <begin position="1"/>
        <end position="153"/>
    </location>
</feature>
<accession>P0AEV6</accession>
<accession>P16427</accession>
<proteinExistence type="inferred from homology"/>
<evidence type="ECO:0000250" key="1"/>
<sequence length="153" mass="17627">MTIWEISEKADYIAQRHRRLQDQWHIYCNSLVQGITLSKARLHHAMSCAPDKELCFVLFEHFRIYVTLADGFNSHTIEYYVETKDGEDKQRIAQAQLSIDGMIDGKVNIRDREQVLEHYLEKIAGVYDSLYTAIENNVPVNLSQLVKGQSPAA</sequence>
<organism>
    <name type="scientific">Shigella flexneri</name>
    <dbReference type="NCBI Taxonomy" id="623"/>
    <lineage>
        <taxon>Bacteria</taxon>
        <taxon>Pseudomonadati</taxon>
        <taxon>Pseudomonadota</taxon>
        <taxon>Gammaproteobacteria</taxon>
        <taxon>Enterobacterales</taxon>
        <taxon>Enterobacteriaceae</taxon>
        <taxon>Shigella</taxon>
    </lineage>
</organism>
<reference key="1">
    <citation type="journal article" date="2002" name="Nucleic Acids Res.">
        <title>Genome sequence of Shigella flexneri 2a: insights into pathogenicity through comparison with genomes of Escherichia coli K12 and O157.</title>
        <authorList>
            <person name="Jin Q."/>
            <person name="Yuan Z."/>
            <person name="Xu J."/>
            <person name="Wang Y."/>
            <person name="Shen Y."/>
            <person name="Lu W."/>
            <person name="Wang J."/>
            <person name="Liu H."/>
            <person name="Yang J."/>
            <person name="Yang F."/>
            <person name="Zhang X."/>
            <person name="Zhang J."/>
            <person name="Yang G."/>
            <person name="Wu H."/>
            <person name="Qu D."/>
            <person name="Dong J."/>
            <person name="Sun L."/>
            <person name="Xue Y."/>
            <person name="Zhao A."/>
            <person name="Gao Y."/>
            <person name="Zhu J."/>
            <person name="Kan B."/>
            <person name="Ding K."/>
            <person name="Chen S."/>
            <person name="Cheng H."/>
            <person name="Yao Z."/>
            <person name="He B."/>
            <person name="Chen R."/>
            <person name="Ma D."/>
            <person name="Qiang B."/>
            <person name="Wen Y."/>
            <person name="Hou Y."/>
            <person name="Yu J."/>
        </authorList>
    </citation>
    <scope>NUCLEOTIDE SEQUENCE [LARGE SCALE GENOMIC DNA]</scope>
    <source>
        <strain>301 / Serotype 2a</strain>
    </source>
</reference>
<reference key="2">
    <citation type="journal article" date="2003" name="Infect. Immun.">
        <title>Complete genome sequence and comparative genomics of Shigella flexneri serotype 2a strain 2457T.</title>
        <authorList>
            <person name="Wei J."/>
            <person name="Goldberg M.B."/>
            <person name="Burland V."/>
            <person name="Venkatesan M.M."/>
            <person name="Deng W."/>
            <person name="Fournier G."/>
            <person name="Mayhew G.F."/>
            <person name="Plunkett G. III"/>
            <person name="Rose D.J."/>
            <person name="Darling A."/>
            <person name="Mau B."/>
            <person name="Perna N.T."/>
            <person name="Payne S.M."/>
            <person name="Runyen-Janecky L.J."/>
            <person name="Zhou S."/>
            <person name="Schwartz D.C."/>
            <person name="Blattner F.R."/>
        </authorList>
    </citation>
    <scope>NUCLEOTIDE SEQUENCE [LARGE SCALE GENOMIC DNA]</scope>
    <source>
        <strain>ATCC 700930 / 2457T / Serotype 2a</strain>
    </source>
</reference>
<dbReference type="EMBL" id="AE005674">
    <property type="protein sequence ID" value="AAN44233.1"/>
    <property type="molecule type" value="Genomic_DNA"/>
</dbReference>
<dbReference type="EMBL" id="AE014073">
    <property type="protein sequence ID" value="AAP18060.1"/>
    <property type="molecule type" value="Genomic_DNA"/>
</dbReference>
<dbReference type="RefSeq" id="NP_708526.1">
    <property type="nucleotide sequence ID" value="NC_004337.2"/>
</dbReference>
<dbReference type="RefSeq" id="WP_000158056.1">
    <property type="nucleotide sequence ID" value="NZ_WPGW01000014.1"/>
</dbReference>
<dbReference type="STRING" id="198214.SF2742"/>
<dbReference type="PaxDb" id="198214-SF2742"/>
<dbReference type="GeneID" id="1025724"/>
<dbReference type="GeneID" id="93779283"/>
<dbReference type="KEGG" id="sfl:SF2742"/>
<dbReference type="KEGG" id="sfx:S2934"/>
<dbReference type="PATRIC" id="fig|198214.7.peg.3265"/>
<dbReference type="HOGENOM" id="CLU_115336_0_0_6"/>
<dbReference type="Proteomes" id="UP000001006">
    <property type="component" value="Chromosome"/>
</dbReference>
<dbReference type="Proteomes" id="UP000002673">
    <property type="component" value="Chromosome"/>
</dbReference>
<dbReference type="InterPro" id="IPR021285">
    <property type="entry name" value="Tscrpt_reg_HycA"/>
</dbReference>
<dbReference type="NCBIfam" id="NF007567">
    <property type="entry name" value="PRK10198.1"/>
    <property type="match status" value="1"/>
</dbReference>
<dbReference type="Pfam" id="PF11046">
    <property type="entry name" value="HycA_repressor"/>
    <property type="match status" value="1"/>
</dbReference>